<accession>Q66HA5</accession>
<sequence>MHKRNGPQAPPGRGAVTARQLGLLVDFSPDGLMIPEDGVNDEELEAEFLALVGGQPQALEKLKGKGPLPMEAIEKMARLCMRDLDEDEEGTDEDVEADEDLLAELNEVLGEERKAVEPAMPVVQPKPSSPNPGIEATLQERLILYQSAVESARQAGDSAKMRRYDRGLKTLENLLVSAKKGNTINEADIPPPVASGKGPAIGHSHTHTTSHLAPVSPPAPEPSVTLEAPSTTAQTSAKPQLSPDPCSPLARLQSLQHEYKVAALRAKHQDDTATAARYLRVSKSFDPVLEALSRGELVDLSRLPPPPDQLSPEPPLPAAQPVTPASTLTRPEVPQPPKNLLEALEQRMERYHVAAAQAKAKGDQRKARMHERIVKQYQDAIRAHKAGRAVDVAELPVPPGFPPIQGLESAEPSQQSLVGVLETAMKLANHEEGSDEEEEETPKKNTPAASTAQPKASPSRAPPSGPAPAGKAASKGTSTRAQQQLAFLEGRKKQLLQAALRAKQKNDVEGAKMHLRQAKGLEPMLEASRNGLPVDIAKVPPAPVNKDDFVLVQRPGPGMSQEAVRRYGELTKLLRQQHEMCLNHSTQFTHLGNIAETIKFEKLAEDCKRSMDTLKQAFARSLPTPAARFEQRTFSVIKIFPDLSNNDMLLFIVKGINLPTPPGLSPSDLDAFVRFDFPYPNVEEAQKDKTSVIKSTDSPEFKEQFKLCINRGHRGFRRAIQTKGIKFEVVHKGGLFKTDRVLGTAQLKLDTLETACEVHEILEVLDGRRPTGGRLEVMVRIREPLTAQQLETTTERWLVIDHIPAAVPTVTGPKAKVPLIPASSKEAGNRSSRPLHSLSVLAFDQERLERKILALRQARRPVPPEVAQQYQDVVQRSQWQRAQLEQGGAALRREYASHLERQLHFYTEAARRLGYDGSREAAKEALYRRNLVESELQRLRR</sequence>
<name>C2D1A_RAT</name>
<reference key="1">
    <citation type="journal article" date="2004" name="Nature">
        <title>Genome sequence of the Brown Norway rat yields insights into mammalian evolution.</title>
        <authorList>
            <person name="Gibbs R.A."/>
            <person name="Weinstock G.M."/>
            <person name="Metzker M.L."/>
            <person name="Muzny D.M."/>
            <person name="Sodergren E.J."/>
            <person name="Scherer S."/>
            <person name="Scott G."/>
            <person name="Steffen D."/>
            <person name="Worley K.C."/>
            <person name="Burch P.E."/>
            <person name="Okwuonu G."/>
            <person name="Hines S."/>
            <person name="Lewis L."/>
            <person name="Deramo C."/>
            <person name="Delgado O."/>
            <person name="Dugan-Rocha S."/>
            <person name="Miner G."/>
            <person name="Morgan M."/>
            <person name="Hawes A."/>
            <person name="Gill R."/>
            <person name="Holt R.A."/>
            <person name="Adams M.D."/>
            <person name="Amanatides P.G."/>
            <person name="Baden-Tillson H."/>
            <person name="Barnstead M."/>
            <person name="Chin S."/>
            <person name="Evans C.A."/>
            <person name="Ferriera S."/>
            <person name="Fosler C."/>
            <person name="Glodek A."/>
            <person name="Gu Z."/>
            <person name="Jennings D."/>
            <person name="Kraft C.L."/>
            <person name="Nguyen T."/>
            <person name="Pfannkoch C.M."/>
            <person name="Sitter C."/>
            <person name="Sutton G.G."/>
            <person name="Venter J.C."/>
            <person name="Woodage T."/>
            <person name="Smith D."/>
            <person name="Lee H.-M."/>
            <person name="Gustafson E."/>
            <person name="Cahill P."/>
            <person name="Kana A."/>
            <person name="Doucette-Stamm L."/>
            <person name="Weinstock K."/>
            <person name="Fechtel K."/>
            <person name="Weiss R.B."/>
            <person name="Dunn D.M."/>
            <person name="Green E.D."/>
            <person name="Blakesley R.W."/>
            <person name="Bouffard G.G."/>
            <person name="De Jong P.J."/>
            <person name="Osoegawa K."/>
            <person name="Zhu B."/>
            <person name="Marra M."/>
            <person name="Schein J."/>
            <person name="Bosdet I."/>
            <person name="Fjell C."/>
            <person name="Jones S."/>
            <person name="Krzywinski M."/>
            <person name="Mathewson C."/>
            <person name="Siddiqui A."/>
            <person name="Wye N."/>
            <person name="McPherson J."/>
            <person name="Zhao S."/>
            <person name="Fraser C.M."/>
            <person name="Shetty J."/>
            <person name="Shatsman S."/>
            <person name="Geer K."/>
            <person name="Chen Y."/>
            <person name="Abramzon S."/>
            <person name="Nierman W.C."/>
            <person name="Havlak P.H."/>
            <person name="Chen R."/>
            <person name="Durbin K.J."/>
            <person name="Egan A."/>
            <person name="Ren Y."/>
            <person name="Song X.-Z."/>
            <person name="Li B."/>
            <person name="Liu Y."/>
            <person name="Qin X."/>
            <person name="Cawley S."/>
            <person name="Cooney A.J."/>
            <person name="D'Souza L.M."/>
            <person name="Martin K."/>
            <person name="Wu J.Q."/>
            <person name="Gonzalez-Garay M.L."/>
            <person name="Jackson A.R."/>
            <person name="Kalafus K.J."/>
            <person name="McLeod M.P."/>
            <person name="Milosavljevic A."/>
            <person name="Virk D."/>
            <person name="Volkov A."/>
            <person name="Wheeler D.A."/>
            <person name="Zhang Z."/>
            <person name="Bailey J.A."/>
            <person name="Eichler E.E."/>
            <person name="Tuzun E."/>
            <person name="Birney E."/>
            <person name="Mongin E."/>
            <person name="Ureta-Vidal A."/>
            <person name="Woodwark C."/>
            <person name="Zdobnov E."/>
            <person name="Bork P."/>
            <person name="Suyama M."/>
            <person name="Torrents D."/>
            <person name="Alexandersson M."/>
            <person name="Trask B.J."/>
            <person name="Young J.M."/>
            <person name="Huang H."/>
            <person name="Wang H."/>
            <person name="Xing H."/>
            <person name="Daniels S."/>
            <person name="Gietzen D."/>
            <person name="Schmidt J."/>
            <person name="Stevens K."/>
            <person name="Vitt U."/>
            <person name="Wingrove J."/>
            <person name="Camara F."/>
            <person name="Mar Alba M."/>
            <person name="Abril J.F."/>
            <person name="Guigo R."/>
            <person name="Smit A."/>
            <person name="Dubchak I."/>
            <person name="Rubin E.M."/>
            <person name="Couronne O."/>
            <person name="Poliakov A."/>
            <person name="Huebner N."/>
            <person name="Ganten D."/>
            <person name="Goesele C."/>
            <person name="Hummel O."/>
            <person name="Kreitler T."/>
            <person name="Lee Y.-A."/>
            <person name="Monti J."/>
            <person name="Schulz H."/>
            <person name="Zimdahl H."/>
            <person name="Himmelbauer H."/>
            <person name="Lehrach H."/>
            <person name="Jacob H.J."/>
            <person name="Bromberg S."/>
            <person name="Gullings-Handley J."/>
            <person name="Jensen-Seaman M.I."/>
            <person name="Kwitek A.E."/>
            <person name="Lazar J."/>
            <person name="Pasko D."/>
            <person name="Tonellato P.J."/>
            <person name="Twigger S."/>
            <person name="Ponting C.P."/>
            <person name="Duarte J.M."/>
            <person name="Rice S."/>
            <person name="Goodstadt L."/>
            <person name="Beatson S.A."/>
            <person name="Emes R.D."/>
            <person name="Winter E.E."/>
            <person name="Webber C."/>
            <person name="Brandt P."/>
            <person name="Nyakatura G."/>
            <person name="Adetobi M."/>
            <person name="Chiaromonte F."/>
            <person name="Elnitski L."/>
            <person name="Eswara P."/>
            <person name="Hardison R.C."/>
            <person name="Hou M."/>
            <person name="Kolbe D."/>
            <person name="Makova K."/>
            <person name="Miller W."/>
            <person name="Nekrutenko A."/>
            <person name="Riemer C."/>
            <person name="Schwartz S."/>
            <person name="Taylor J."/>
            <person name="Yang S."/>
            <person name="Zhang Y."/>
            <person name="Lindpaintner K."/>
            <person name="Andrews T.D."/>
            <person name="Caccamo M."/>
            <person name="Clamp M."/>
            <person name="Clarke L."/>
            <person name="Curwen V."/>
            <person name="Durbin R.M."/>
            <person name="Eyras E."/>
            <person name="Searle S.M."/>
            <person name="Cooper G.M."/>
            <person name="Batzoglou S."/>
            <person name="Brudno M."/>
            <person name="Sidow A."/>
            <person name="Stone E.A."/>
            <person name="Payseur B.A."/>
            <person name="Bourque G."/>
            <person name="Lopez-Otin C."/>
            <person name="Puente X.S."/>
            <person name="Chakrabarti K."/>
            <person name="Chatterji S."/>
            <person name="Dewey C."/>
            <person name="Pachter L."/>
            <person name="Bray N."/>
            <person name="Yap V.B."/>
            <person name="Caspi A."/>
            <person name="Tesler G."/>
            <person name="Pevzner P.A."/>
            <person name="Haussler D."/>
            <person name="Roskin K.M."/>
            <person name="Baertsch R."/>
            <person name="Clawson H."/>
            <person name="Furey T.S."/>
            <person name="Hinrichs A.S."/>
            <person name="Karolchik D."/>
            <person name="Kent W.J."/>
            <person name="Rosenbloom K.R."/>
            <person name="Trumbower H."/>
            <person name="Weirauch M."/>
            <person name="Cooper D.N."/>
            <person name="Stenson P.D."/>
            <person name="Ma B."/>
            <person name="Brent M."/>
            <person name="Arumugam M."/>
            <person name="Shteynberg D."/>
            <person name="Copley R.R."/>
            <person name="Taylor M.S."/>
            <person name="Riethman H."/>
            <person name="Mudunuri U."/>
            <person name="Peterson J."/>
            <person name="Guyer M."/>
            <person name="Felsenfeld A."/>
            <person name="Old S."/>
            <person name="Mockrin S."/>
            <person name="Collins F.S."/>
        </authorList>
    </citation>
    <scope>NUCLEOTIDE SEQUENCE [LARGE SCALE GENOMIC DNA]</scope>
    <source>
        <strain>Brown Norway</strain>
    </source>
</reference>
<reference key="2">
    <citation type="journal article" date="2004" name="Genome Res.">
        <title>The status, quality, and expansion of the NIH full-length cDNA project: the Mammalian Gene Collection (MGC).</title>
        <authorList>
            <consortium name="The MGC Project Team"/>
        </authorList>
    </citation>
    <scope>NUCLEOTIDE SEQUENCE [LARGE SCALE MRNA] (ISOFORM 2)</scope>
    <source>
        <tissue>Lung</tissue>
    </source>
</reference>
<reference key="3">
    <citation type="journal article" date="2003" name="J. Neurosci.">
        <title>Freud-1: a neuronal calcium-regulated repressor of the 5-HT1A receptor gene.</title>
        <authorList>
            <person name="Ou X.-M."/>
            <person name="Lemonde S."/>
            <person name="Jafar-Nejad H."/>
            <person name="Bown C.D."/>
            <person name="Goto A."/>
            <person name="Rogaeva A."/>
            <person name="Albert P.R."/>
        </authorList>
    </citation>
    <scope>TISSUE SPECIFICITY</scope>
    <scope>SUBCELLULAR LOCATION</scope>
    <scope>FUNCTION</scope>
</reference>
<reference key="4">
    <citation type="journal article" date="2012" name="Nat. Commun.">
        <title>Quantitative maps of protein phosphorylation sites across 14 different rat organs and tissues.</title>
        <authorList>
            <person name="Lundby A."/>
            <person name="Secher A."/>
            <person name="Lage K."/>
            <person name="Nordsborg N.B."/>
            <person name="Dmytriyev A."/>
            <person name="Lundby C."/>
            <person name="Olsen J.V."/>
        </authorList>
    </citation>
    <scope>PHOSPHORYLATION [LARGE SCALE ANALYSIS] AT THR-91 AND SER-434</scope>
    <scope>IDENTIFICATION BY MASS SPECTROMETRY [LARGE SCALE ANALYSIS]</scope>
</reference>
<protein>
    <recommendedName>
        <fullName>Coiled-coil and C2 domain-containing protein 1A</fullName>
    </recommendedName>
    <alternativeName>
        <fullName>Five prime repressor element under dual repression-binding protein 1</fullName>
        <shortName>FRE under dual repression-binding protein 1</shortName>
        <shortName>Freud-1</shortName>
    </alternativeName>
</protein>
<organism>
    <name type="scientific">Rattus norvegicus</name>
    <name type="common">Rat</name>
    <dbReference type="NCBI Taxonomy" id="10116"/>
    <lineage>
        <taxon>Eukaryota</taxon>
        <taxon>Metazoa</taxon>
        <taxon>Chordata</taxon>
        <taxon>Craniata</taxon>
        <taxon>Vertebrata</taxon>
        <taxon>Euteleostomi</taxon>
        <taxon>Mammalia</taxon>
        <taxon>Eutheria</taxon>
        <taxon>Euarchontoglires</taxon>
        <taxon>Glires</taxon>
        <taxon>Rodentia</taxon>
        <taxon>Myomorpha</taxon>
        <taxon>Muroidea</taxon>
        <taxon>Muridae</taxon>
        <taxon>Murinae</taxon>
        <taxon>Rattus</taxon>
    </lineage>
</organism>
<feature type="chain" id="PRO_0000239611" description="Coiled-coil and C2 domain-containing protein 1A">
    <location>
        <begin position="1"/>
        <end position="941"/>
    </location>
</feature>
<feature type="domain" description="C2" evidence="4">
    <location>
        <begin position="628"/>
        <end position="762"/>
    </location>
</feature>
<feature type="region of interest" description="Disordered" evidence="5">
    <location>
        <begin position="183"/>
        <end position="248"/>
    </location>
</feature>
<feature type="region of interest" description="Disordered" evidence="5">
    <location>
        <begin position="301"/>
        <end position="336"/>
    </location>
</feature>
<feature type="region of interest" description="Disordered" evidence="5">
    <location>
        <begin position="428"/>
        <end position="482"/>
    </location>
</feature>
<feature type="coiled-coil region" evidence="3">
    <location>
        <begin position="338"/>
        <end position="384"/>
    </location>
</feature>
<feature type="coiled-coil region" evidence="3">
    <location>
        <begin position="475"/>
        <end position="508"/>
    </location>
</feature>
<feature type="compositionally biased region" description="Polar residues" evidence="5">
    <location>
        <begin position="228"/>
        <end position="239"/>
    </location>
</feature>
<feature type="compositionally biased region" description="Pro residues" evidence="5">
    <location>
        <begin position="303"/>
        <end position="318"/>
    </location>
</feature>
<feature type="compositionally biased region" description="Low complexity" evidence="5">
    <location>
        <begin position="467"/>
        <end position="476"/>
    </location>
</feature>
<feature type="modified residue" description="Phosphothreonine" evidence="9">
    <location>
        <position position="91"/>
    </location>
</feature>
<feature type="modified residue" description="Phosphoserine" evidence="2">
    <location>
        <position position="247"/>
    </location>
</feature>
<feature type="modified residue" description="Phosphoserine" evidence="9">
    <location>
        <position position="434"/>
    </location>
</feature>
<feature type="splice variant" id="VSP_019243" description="In isoform 2." evidence="7">
    <location>
        <begin position="125"/>
        <end position="169"/>
    </location>
</feature>
<comment type="function">
    <text evidence="1 6">Transcription factor that binds specifically to the DRE (dual repressor element) and represses 5-HT1A gene transcription though this element. Mediates HDAC-independent repression of HTR1A promoter. CAMK2G inhibits CC2D1a-induced repression of the HTR1A. May play a role in the altered regulation of 5-HT1A receptors associated with anxiety and major depression. Performs essential function in controlling functional maturation of synapses (By similarity).</text>
</comment>
<comment type="subcellular location">
    <subcellularLocation>
        <location evidence="6">Cytoplasm</location>
    </subcellularLocation>
    <subcellularLocation>
        <location evidence="6">Nucleus</location>
    </subcellularLocation>
    <subcellularLocation>
        <location evidence="2">Cytoplasm</location>
        <location evidence="2">Cytoskeleton</location>
        <location evidence="2">Microtubule organizing center</location>
        <location evidence="2">Centrosome</location>
    </subcellularLocation>
</comment>
<comment type="alternative products">
    <event type="alternative splicing"/>
    <isoform>
        <id>Q66HA5-1</id>
        <name>1</name>
        <sequence type="displayed"/>
    </isoform>
    <isoform>
        <id>Q66HA5-2</id>
        <name>2</name>
        <sequence type="described" ref="VSP_019243"/>
    </isoform>
</comment>
<comment type="tissue specificity">
    <text evidence="6">Strongly expressed in several brain areas including frontal cortex, cortex, mesencephalon, hippocampus, midbrain and hypothalamus. Also expressed in testis and at low levels in pituitary, liver and kidney. In brain the highest levels are detected in hippocampal pyramidal cells and raphe nuclei.</text>
</comment>
<comment type="domain">
    <text evidence="1">The C2 domain is required for the repression.</text>
</comment>
<comment type="similarity">
    <text evidence="8">Belongs to the CC2D1 family.</text>
</comment>
<gene>
    <name type="primary">Cc2d1a</name>
</gene>
<dbReference type="EMBL" id="AABR03113552">
    <property type="status" value="NOT_ANNOTATED_CDS"/>
    <property type="molecule type" value="Genomic_DNA"/>
</dbReference>
<dbReference type="EMBL" id="BC081948">
    <property type="protein sequence ID" value="AAH81948.1"/>
    <property type="molecule type" value="mRNA"/>
</dbReference>
<dbReference type="RefSeq" id="NP_001013891.1">
    <molecule id="Q66HA5-2"/>
    <property type="nucleotide sequence ID" value="NM_001013869.2"/>
</dbReference>
<dbReference type="RefSeq" id="NP_001420919.1">
    <molecule id="Q66HA5-1"/>
    <property type="nucleotide sequence ID" value="NM_001433990.1"/>
</dbReference>
<dbReference type="RefSeq" id="XP_006255296.1">
    <property type="nucleotide sequence ID" value="XM_006255234.2"/>
</dbReference>
<dbReference type="SMR" id="Q66HA5"/>
<dbReference type="FunCoup" id="Q66HA5">
    <property type="interactions" value="3181"/>
</dbReference>
<dbReference type="IntAct" id="Q66HA5">
    <property type="interactions" value="1"/>
</dbReference>
<dbReference type="MINT" id="Q66HA5"/>
<dbReference type="STRING" id="10116.ENSRNOP00000009806"/>
<dbReference type="GlyGen" id="Q66HA5">
    <property type="glycosylation" value="2 sites"/>
</dbReference>
<dbReference type="iPTMnet" id="Q66HA5"/>
<dbReference type="PhosphoSitePlus" id="Q66HA5"/>
<dbReference type="jPOST" id="Q66HA5"/>
<dbReference type="PaxDb" id="10116-ENSRNOP00000009806"/>
<dbReference type="GeneID" id="288908"/>
<dbReference type="KEGG" id="rno:288908"/>
<dbReference type="AGR" id="RGD:1306108"/>
<dbReference type="CTD" id="54862"/>
<dbReference type="RGD" id="1306108">
    <property type="gene designation" value="Cc2d1a"/>
</dbReference>
<dbReference type="VEuPathDB" id="HostDB:ENSRNOG00000006747"/>
<dbReference type="eggNOG" id="KOG3837">
    <property type="taxonomic scope" value="Eukaryota"/>
</dbReference>
<dbReference type="HOGENOM" id="CLU_008808_1_0_1"/>
<dbReference type="InParanoid" id="Q66HA5"/>
<dbReference type="PhylomeDB" id="Q66HA5"/>
<dbReference type="PRO" id="PR:Q66HA5"/>
<dbReference type="Proteomes" id="UP000002494">
    <property type="component" value="Chromosome 19"/>
</dbReference>
<dbReference type="Bgee" id="ENSRNOG00000006747">
    <property type="expression patterns" value="Expressed in frontal cortex and 19 other cell types or tissues"/>
</dbReference>
<dbReference type="GO" id="GO:0005856">
    <property type="term" value="C:cytoskeleton"/>
    <property type="evidence" value="ECO:0007669"/>
    <property type="project" value="UniProtKB-KW"/>
</dbReference>
<dbReference type="GO" id="GO:0005829">
    <property type="term" value="C:cytosol"/>
    <property type="evidence" value="ECO:0000266"/>
    <property type="project" value="RGD"/>
</dbReference>
<dbReference type="GO" id="GO:0010008">
    <property type="term" value="C:endosome membrane"/>
    <property type="evidence" value="ECO:0000266"/>
    <property type="project" value="RGD"/>
</dbReference>
<dbReference type="GO" id="GO:0098978">
    <property type="term" value="C:glutamatergic synapse"/>
    <property type="evidence" value="ECO:0000266"/>
    <property type="project" value="RGD"/>
</dbReference>
<dbReference type="GO" id="GO:0005634">
    <property type="term" value="C:nucleus"/>
    <property type="evidence" value="ECO:0000314"/>
    <property type="project" value="MGI"/>
</dbReference>
<dbReference type="GO" id="GO:0045202">
    <property type="term" value="C:synapse"/>
    <property type="evidence" value="ECO:0000266"/>
    <property type="project" value="RGD"/>
</dbReference>
<dbReference type="GO" id="GO:0000981">
    <property type="term" value="F:DNA-binding transcription factor activity, RNA polymerase II-specific"/>
    <property type="evidence" value="ECO:0000318"/>
    <property type="project" value="GO_Central"/>
</dbReference>
<dbReference type="GO" id="GO:0001227">
    <property type="term" value="F:DNA-binding transcription repressor activity, RNA polymerase II-specific"/>
    <property type="evidence" value="ECO:0000266"/>
    <property type="project" value="RGD"/>
</dbReference>
<dbReference type="GO" id="GO:0000978">
    <property type="term" value="F:RNA polymerase II cis-regulatory region sequence-specific DNA binding"/>
    <property type="evidence" value="ECO:0000266"/>
    <property type="project" value="RGD"/>
</dbReference>
<dbReference type="GO" id="GO:0150023">
    <property type="term" value="P:apical dendrite arborization"/>
    <property type="evidence" value="ECO:0000266"/>
    <property type="project" value="RGD"/>
</dbReference>
<dbReference type="GO" id="GO:0140059">
    <property type="term" value="P:dendrite arborization"/>
    <property type="evidence" value="ECO:0000266"/>
    <property type="project" value="RGD"/>
</dbReference>
<dbReference type="GO" id="GO:0007032">
    <property type="term" value="P:endosome organization"/>
    <property type="evidence" value="ECO:0000266"/>
    <property type="project" value="RGD"/>
</dbReference>
<dbReference type="GO" id="GO:1905381">
    <property type="term" value="P:negative regulation of snRNA transcription by RNA polymerase II"/>
    <property type="evidence" value="ECO:0000266"/>
    <property type="project" value="RGD"/>
</dbReference>
<dbReference type="GO" id="GO:0000122">
    <property type="term" value="P:negative regulation of transcription by RNA polymerase II"/>
    <property type="evidence" value="ECO:0000266"/>
    <property type="project" value="RGD"/>
</dbReference>
<dbReference type="GO" id="GO:0150052">
    <property type="term" value="P:regulation of postsynapse assembly"/>
    <property type="evidence" value="ECO:0000266"/>
    <property type="project" value="RGD"/>
</dbReference>
<dbReference type="GO" id="GO:0043576">
    <property type="term" value="P:regulation of respiratory gaseous exchange"/>
    <property type="evidence" value="ECO:0000266"/>
    <property type="project" value="RGD"/>
</dbReference>
<dbReference type="GO" id="GO:0002087">
    <property type="term" value="P:regulation of respiratory gaseous exchange by nervous system process"/>
    <property type="evidence" value="ECO:0000266"/>
    <property type="project" value="RGD"/>
</dbReference>
<dbReference type="GO" id="GO:0006357">
    <property type="term" value="P:regulation of transcription by RNA polymerase II"/>
    <property type="evidence" value="ECO:0000318"/>
    <property type="project" value="GO_Central"/>
</dbReference>
<dbReference type="CDD" id="cd08690">
    <property type="entry name" value="C2_Freud-1"/>
    <property type="match status" value="1"/>
</dbReference>
<dbReference type="FunFam" id="2.60.40.150:FF:000110">
    <property type="entry name" value="Coiled-coil and C2 domain-containing protein 1A"/>
    <property type="match status" value="1"/>
</dbReference>
<dbReference type="Gene3D" id="2.60.40.150">
    <property type="entry name" value="C2 domain"/>
    <property type="match status" value="1"/>
</dbReference>
<dbReference type="InterPro" id="IPR000008">
    <property type="entry name" value="C2_dom"/>
</dbReference>
<dbReference type="InterPro" id="IPR035892">
    <property type="entry name" value="C2_domain_sf"/>
</dbReference>
<dbReference type="InterPro" id="IPR037772">
    <property type="entry name" value="C2_Freud"/>
</dbReference>
<dbReference type="InterPro" id="IPR039725">
    <property type="entry name" value="CC2D1A/B"/>
</dbReference>
<dbReference type="InterPro" id="IPR006608">
    <property type="entry name" value="CC2D1A/B_DM14"/>
</dbReference>
<dbReference type="PANTHER" id="PTHR13076">
    <property type="entry name" value="COILED-COIL AND C2 DOMAIN-CONTAINING PROTEIN 1-LIKE"/>
    <property type="match status" value="1"/>
</dbReference>
<dbReference type="PANTHER" id="PTHR13076:SF8">
    <property type="entry name" value="COILED-COIL AND C2 DOMAIN-CONTAINING PROTEIN 1A"/>
    <property type="match status" value="1"/>
</dbReference>
<dbReference type="Pfam" id="PF00168">
    <property type="entry name" value="C2"/>
    <property type="match status" value="1"/>
</dbReference>
<dbReference type="Pfam" id="PF21528">
    <property type="entry name" value="CC2D1A-B_DM14"/>
    <property type="match status" value="3"/>
</dbReference>
<dbReference type="SMART" id="SM00239">
    <property type="entry name" value="C2"/>
    <property type="match status" value="1"/>
</dbReference>
<dbReference type="SMART" id="SM00685">
    <property type="entry name" value="DM14"/>
    <property type="match status" value="4"/>
</dbReference>
<dbReference type="SUPFAM" id="SSF49562">
    <property type="entry name" value="C2 domain (Calcium/lipid-binding domain, CaLB)"/>
    <property type="match status" value="1"/>
</dbReference>
<dbReference type="PROSITE" id="PS50004">
    <property type="entry name" value="C2"/>
    <property type="match status" value="1"/>
</dbReference>
<evidence type="ECO:0000250" key="1"/>
<evidence type="ECO:0000250" key="2">
    <source>
        <dbReference type="UniProtKB" id="Q6P1N0"/>
    </source>
</evidence>
<evidence type="ECO:0000255" key="3"/>
<evidence type="ECO:0000255" key="4">
    <source>
        <dbReference type="PROSITE-ProRule" id="PRU00041"/>
    </source>
</evidence>
<evidence type="ECO:0000256" key="5">
    <source>
        <dbReference type="SAM" id="MobiDB-lite"/>
    </source>
</evidence>
<evidence type="ECO:0000269" key="6">
    <source>
    </source>
</evidence>
<evidence type="ECO:0000303" key="7">
    <source>
    </source>
</evidence>
<evidence type="ECO:0000305" key="8"/>
<evidence type="ECO:0007744" key="9">
    <source>
    </source>
</evidence>
<keyword id="KW-0025">Alternative splicing</keyword>
<keyword id="KW-0175">Coiled coil</keyword>
<keyword id="KW-0963">Cytoplasm</keyword>
<keyword id="KW-0206">Cytoskeleton</keyword>
<keyword id="KW-0238">DNA-binding</keyword>
<keyword id="KW-0539">Nucleus</keyword>
<keyword id="KW-0597">Phosphoprotein</keyword>
<keyword id="KW-1185">Reference proteome</keyword>
<keyword id="KW-0678">Repressor</keyword>
<keyword id="KW-0804">Transcription</keyword>
<keyword id="KW-0805">Transcription regulation</keyword>
<proteinExistence type="evidence at protein level"/>